<protein>
    <recommendedName>
        <fullName evidence="1">Methylthioribose-1-phosphate isomerase</fullName>
        <shortName evidence="1">M1Pi</shortName>
        <shortName evidence="1">MTR-1-P isomerase</shortName>
        <ecNumber evidence="1">5.3.1.23</ecNumber>
    </recommendedName>
    <alternativeName>
        <fullName evidence="1">S-methyl-5-thioribose-1-phosphate isomerase</fullName>
    </alternativeName>
</protein>
<accession>B0KTX5</accession>
<proteinExistence type="inferred from homology"/>
<organism>
    <name type="scientific">Pseudomonas putida (strain GB-1)</name>
    <dbReference type="NCBI Taxonomy" id="76869"/>
    <lineage>
        <taxon>Bacteria</taxon>
        <taxon>Pseudomonadati</taxon>
        <taxon>Pseudomonadota</taxon>
        <taxon>Gammaproteobacteria</taxon>
        <taxon>Pseudomonadales</taxon>
        <taxon>Pseudomonadaceae</taxon>
        <taxon>Pseudomonas</taxon>
    </lineage>
</organism>
<feature type="chain" id="PRO_0000357227" description="Methylthioribose-1-phosphate isomerase">
    <location>
        <begin position="1"/>
        <end position="358"/>
    </location>
</feature>
<feature type="active site" description="Proton donor" evidence="1">
    <location>
        <position position="246"/>
    </location>
</feature>
<feature type="binding site" evidence="1">
    <location>
        <begin position="54"/>
        <end position="56"/>
    </location>
    <ligand>
        <name>substrate</name>
    </ligand>
</feature>
<feature type="binding site" evidence="1">
    <location>
        <position position="96"/>
    </location>
    <ligand>
        <name>substrate</name>
    </ligand>
</feature>
<feature type="binding site" evidence="1">
    <location>
        <position position="205"/>
    </location>
    <ligand>
        <name>substrate</name>
    </ligand>
</feature>
<feature type="binding site" evidence="1">
    <location>
        <begin position="256"/>
        <end position="257"/>
    </location>
    <ligand>
        <name>substrate</name>
    </ligand>
</feature>
<name>MTNA_PSEPG</name>
<sequence length="358" mass="38819">MRERLLAAEKVTAIRWQGGALHLLDQRLLPSQERWLACDNVAQVAAAIRDMVVRGASAIGIAAAYGLVLALEERLAQGGDWEMDLEEDFLTLAEARPTAANLFWALNRMRERLLRLRADEDVLAALEAEAVAIHESDREANLTMSQQGIELIRRHQGNAQALLTYGNAGALASGGFGTALGVIRAGYLEGMVERVYAGETRPWLQGSRLTAWELANEGIPVTLCADSALAHLMKTKGITWVVVGADCIAANGDVASKIGTYQLAVSAMHHGVRFMVVAPSTSIDLNLATGEDIPLEERDADEWLDFGGAPAVPDVEVFNPVFDVTPADLIDVIVTERGIVERPDTAKLAQLICRKRLH</sequence>
<comment type="function">
    <text evidence="1">Catalyzes the interconversion of methylthioribose-1-phosphate (MTR-1-P) into methylthioribulose-1-phosphate (MTRu-1-P).</text>
</comment>
<comment type="catalytic activity">
    <reaction evidence="1">
        <text>5-(methylsulfanyl)-alpha-D-ribose 1-phosphate = 5-(methylsulfanyl)-D-ribulose 1-phosphate</text>
        <dbReference type="Rhea" id="RHEA:19989"/>
        <dbReference type="ChEBI" id="CHEBI:58533"/>
        <dbReference type="ChEBI" id="CHEBI:58548"/>
        <dbReference type="EC" id="5.3.1.23"/>
    </reaction>
</comment>
<comment type="pathway">
    <text evidence="1">Amino-acid biosynthesis; L-methionine biosynthesis via salvage pathway; L-methionine from S-methyl-5-thio-alpha-D-ribose 1-phosphate: step 1/6.</text>
</comment>
<comment type="similarity">
    <text evidence="2">Belongs to the eIF-2B alpha/beta/delta subunits family. MtnA subfamily.</text>
</comment>
<reference key="1">
    <citation type="submission" date="2008-01" db="EMBL/GenBank/DDBJ databases">
        <title>Complete sequence of Pseudomonas putida GB-1.</title>
        <authorList>
            <consortium name="US DOE Joint Genome Institute"/>
            <person name="Copeland A."/>
            <person name="Lucas S."/>
            <person name="Lapidus A."/>
            <person name="Barry K."/>
            <person name="Glavina del Rio T."/>
            <person name="Dalin E."/>
            <person name="Tice H."/>
            <person name="Pitluck S."/>
            <person name="Bruce D."/>
            <person name="Goodwin L."/>
            <person name="Chertkov O."/>
            <person name="Brettin T."/>
            <person name="Detter J.C."/>
            <person name="Han C."/>
            <person name="Kuske C.R."/>
            <person name="Schmutz J."/>
            <person name="Larimer F."/>
            <person name="Land M."/>
            <person name="Hauser L."/>
            <person name="Kyrpides N."/>
            <person name="Kim E."/>
            <person name="McCarthy J.K."/>
            <person name="Richardson P."/>
        </authorList>
    </citation>
    <scope>NUCLEOTIDE SEQUENCE [LARGE SCALE GENOMIC DNA]</scope>
    <source>
        <strain>GB-1</strain>
    </source>
</reference>
<dbReference type="EC" id="5.3.1.23" evidence="1"/>
<dbReference type="EMBL" id="CP000926">
    <property type="protein sequence ID" value="ABY97264.1"/>
    <property type="molecule type" value="Genomic_DNA"/>
</dbReference>
<dbReference type="RefSeq" id="WP_012271035.1">
    <property type="nucleotide sequence ID" value="NC_010322.1"/>
</dbReference>
<dbReference type="SMR" id="B0KTX5"/>
<dbReference type="KEGG" id="ppg:PputGB1_1357"/>
<dbReference type="eggNOG" id="COG0182">
    <property type="taxonomic scope" value="Bacteria"/>
</dbReference>
<dbReference type="HOGENOM" id="CLU_016218_1_2_6"/>
<dbReference type="UniPathway" id="UPA00904">
    <property type="reaction ID" value="UER00874"/>
</dbReference>
<dbReference type="Proteomes" id="UP000002157">
    <property type="component" value="Chromosome"/>
</dbReference>
<dbReference type="GO" id="GO:0046523">
    <property type="term" value="F:S-methyl-5-thioribose-1-phosphate isomerase activity"/>
    <property type="evidence" value="ECO:0007669"/>
    <property type="project" value="UniProtKB-UniRule"/>
</dbReference>
<dbReference type="GO" id="GO:0019509">
    <property type="term" value="P:L-methionine salvage from methylthioadenosine"/>
    <property type="evidence" value="ECO:0007669"/>
    <property type="project" value="UniProtKB-UniRule"/>
</dbReference>
<dbReference type="FunFam" id="1.20.120.420:FF:000008">
    <property type="entry name" value="Methylthioribose-1-phosphate isomerase"/>
    <property type="match status" value="1"/>
</dbReference>
<dbReference type="FunFam" id="3.40.50.10470:FF:000006">
    <property type="entry name" value="Methylthioribose-1-phosphate isomerase"/>
    <property type="match status" value="1"/>
</dbReference>
<dbReference type="Gene3D" id="1.20.120.420">
    <property type="entry name" value="translation initiation factor eif-2b, domain 1"/>
    <property type="match status" value="1"/>
</dbReference>
<dbReference type="Gene3D" id="3.40.50.10470">
    <property type="entry name" value="Translation initiation factor eif-2b, domain 2"/>
    <property type="match status" value="1"/>
</dbReference>
<dbReference type="HAMAP" id="MF_01678">
    <property type="entry name" value="Salvage_MtnA"/>
    <property type="match status" value="1"/>
</dbReference>
<dbReference type="InterPro" id="IPR000649">
    <property type="entry name" value="IF-2B-related"/>
</dbReference>
<dbReference type="InterPro" id="IPR005251">
    <property type="entry name" value="IF-M1Pi"/>
</dbReference>
<dbReference type="InterPro" id="IPR042529">
    <property type="entry name" value="IF_2B-like_C"/>
</dbReference>
<dbReference type="InterPro" id="IPR011559">
    <property type="entry name" value="Initiation_fac_2B_a/b/d"/>
</dbReference>
<dbReference type="InterPro" id="IPR027363">
    <property type="entry name" value="M1Pi_N"/>
</dbReference>
<dbReference type="InterPro" id="IPR037171">
    <property type="entry name" value="NagB/RpiA_transferase-like"/>
</dbReference>
<dbReference type="NCBIfam" id="TIGR00524">
    <property type="entry name" value="eIF-2B_rel"/>
    <property type="match status" value="1"/>
</dbReference>
<dbReference type="NCBIfam" id="NF004326">
    <property type="entry name" value="PRK05720.1"/>
    <property type="match status" value="1"/>
</dbReference>
<dbReference type="NCBIfam" id="TIGR00512">
    <property type="entry name" value="salvage_mtnA"/>
    <property type="match status" value="1"/>
</dbReference>
<dbReference type="PANTHER" id="PTHR43475">
    <property type="entry name" value="METHYLTHIORIBOSE-1-PHOSPHATE ISOMERASE"/>
    <property type="match status" value="1"/>
</dbReference>
<dbReference type="PANTHER" id="PTHR43475:SF1">
    <property type="entry name" value="METHYLTHIORIBOSE-1-PHOSPHATE ISOMERASE"/>
    <property type="match status" value="1"/>
</dbReference>
<dbReference type="Pfam" id="PF01008">
    <property type="entry name" value="IF-2B"/>
    <property type="match status" value="1"/>
</dbReference>
<dbReference type="SUPFAM" id="SSF100950">
    <property type="entry name" value="NagB/RpiA/CoA transferase-like"/>
    <property type="match status" value="1"/>
</dbReference>
<keyword id="KW-0028">Amino-acid biosynthesis</keyword>
<keyword id="KW-0413">Isomerase</keyword>
<keyword id="KW-0486">Methionine biosynthesis</keyword>
<evidence type="ECO:0000255" key="1">
    <source>
        <dbReference type="HAMAP-Rule" id="MF_01678"/>
    </source>
</evidence>
<evidence type="ECO:0000305" key="2"/>
<gene>
    <name evidence="1" type="primary">mtnA</name>
    <name type="ordered locus">PputGB1_1357</name>
</gene>